<dbReference type="EMBL" id="CP001488">
    <property type="protein sequence ID" value="ACO00816.1"/>
    <property type="molecule type" value="Genomic_DNA"/>
</dbReference>
<dbReference type="RefSeq" id="WP_004686444.1">
    <property type="nucleotide sequence ID" value="NC_012441.1"/>
</dbReference>
<dbReference type="SMR" id="C0RJ08"/>
<dbReference type="KEGG" id="bmi:BMEA_A1074"/>
<dbReference type="HOGENOM" id="CLU_057693_1_0_5"/>
<dbReference type="Proteomes" id="UP000001748">
    <property type="component" value="Chromosome I"/>
</dbReference>
<dbReference type="GO" id="GO:0005886">
    <property type="term" value="C:plasma membrane"/>
    <property type="evidence" value="ECO:0007669"/>
    <property type="project" value="UniProtKB-SubCell"/>
</dbReference>
<dbReference type="HAMAP" id="MF_01085">
    <property type="entry name" value="UPF0283"/>
    <property type="match status" value="1"/>
</dbReference>
<dbReference type="InterPro" id="IPR021147">
    <property type="entry name" value="DUF697"/>
</dbReference>
<dbReference type="InterPro" id="IPR006507">
    <property type="entry name" value="UPF0283"/>
</dbReference>
<dbReference type="NCBIfam" id="TIGR01620">
    <property type="entry name" value="hyp_HI0043"/>
    <property type="match status" value="1"/>
</dbReference>
<dbReference type="PANTHER" id="PTHR39342">
    <property type="entry name" value="UPF0283 MEMBRANE PROTEIN YCJF"/>
    <property type="match status" value="1"/>
</dbReference>
<dbReference type="PANTHER" id="PTHR39342:SF1">
    <property type="entry name" value="UPF0283 MEMBRANE PROTEIN YCJF"/>
    <property type="match status" value="1"/>
</dbReference>
<dbReference type="Pfam" id="PF05128">
    <property type="entry name" value="DUF697"/>
    <property type="match status" value="1"/>
</dbReference>
<proteinExistence type="inferred from homology"/>
<organism>
    <name type="scientific">Brucella melitensis biotype 2 (strain ATCC 23457)</name>
    <dbReference type="NCBI Taxonomy" id="546272"/>
    <lineage>
        <taxon>Bacteria</taxon>
        <taxon>Pseudomonadati</taxon>
        <taxon>Pseudomonadota</taxon>
        <taxon>Alphaproteobacteria</taxon>
        <taxon>Hyphomicrobiales</taxon>
        <taxon>Brucellaceae</taxon>
        <taxon>Brucella/Ochrobactrum group</taxon>
        <taxon>Brucella</taxon>
    </lineage>
</organism>
<protein>
    <recommendedName>
        <fullName evidence="1">UPF0283 membrane protein BMEA_A1074</fullName>
    </recommendedName>
</protein>
<comment type="subcellular location">
    <subcellularLocation>
        <location evidence="1">Cell inner membrane</location>
        <topology evidence="1">Multi-pass membrane protein</topology>
    </subcellularLocation>
</comment>
<comment type="similarity">
    <text evidence="1">Belongs to the UPF0283 family.</text>
</comment>
<name>Y1074_BRUMB</name>
<feature type="chain" id="PRO_1000149857" description="UPF0283 membrane protein BMEA_A1074">
    <location>
        <begin position="1"/>
        <end position="357"/>
    </location>
</feature>
<feature type="transmembrane region" description="Helical" evidence="1">
    <location>
        <begin position="78"/>
        <end position="98"/>
    </location>
</feature>
<feature type="transmembrane region" description="Helical" evidence="1">
    <location>
        <begin position="109"/>
        <end position="129"/>
    </location>
</feature>
<feature type="region of interest" description="Disordered" evidence="2">
    <location>
        <begin position="1"/>
        <end position="36"/>
    </location>
</feature>
<feature type="compositionally biased region" description="Basic and acidic residues" evidence="2">
    <location>
        <begin position="27"/>
        <end position="36"/>
    </location>
</feature>
<reference key="1">
    <citation type="submission" date="2009-03" db="EMBL/GenBank/DDBJ databases">
        <title>Brucella melitensis ATCC 23457 whole genome shotgun sequencing project.</title>
        <authorList>
            <person name="Setubal J.C."/>
            <person name="Boyle S."/>
            <person name="Crasta O.R."/>
            <person name="Gillespie J.J."/>
            <person name="Kenyon R.W."/>
            <person name="Lu J."/>
            <person name="Mane S."/>
            <person name="Nagrani S."/>
            <person name="Shallom J.M."/>
            <person name="Shallom S."/>
            <person name="Shukla M."/>
            <person name="Snyder E.E."/>
            <person name="Sobral B.W."/>
            <person name="Wattam A.R."/>
            <person name="Will R."/>
            <person name="Williams K."/>
            <person name="Yoo H."/>
            <person name="Munk C."/>
            <person name="Tapia R."/>
            <person name="Han C."/>
            <person name="Detter J.C."/>
            <person name="Bruce D."/>
            <person name="Brettin T.S."/>
        </authorList>
    </citation>
    <scope>NUCLEOTIDE SEQUENCE [LARGE SCALE GENOMIC DNA]</scope>
    <source>
        <strain>ATCC 23457</strain>
    </source>
</reference>
<sequence length="357" mass="38926">MSDKTPRKPTAFRLEQPARVSAASEQEEPRRPRAVKDLEQITPQADVFDLTDDEAAELEILDPAFEAPERKGWSLSRILFGALGILVSFAIGIWTEDLIRALFARADWLGWTALGVAMVALAAFAAIILRELVALRRLASVQHLRKDAADAAERDDMAAARKAVDALRTIAAGIPETAKGRQLLESLTDDIIDGRDLIRLAETEILRPLDREARTLVLNASKRVSIVTAISPRALVDIGYVIFESARLIRRLSQLYGGRPGTLGFIKFARRVIAHLAVTGTIAMGDSVMQQLVGHGLASRLSAKLGEGVVNGLMTARIGIAAMDVVRPFPFNAEKRPGIGDFIGDLARLNSDRNARK</sequence>
<keyword id="KW-0997">Cell inner membrane</keyword>
<keyword id="KW-1003">Cell membrane</keyword>
<keyword id="KW-0472">Membrane</keyword>
<keyword id="KW-0812">Transmembrane</keyword>
<keyword id="KW-1133">Transmembrane helix</keyword>
<accession>C0RJ08</accession>
<gene>
    <name type="ordered locus">BMEA_A1074</name>
</gene>
<evidence type="ECO:0000255" key="1">
    <source>
        <dbReference type="HAMAP-Rule" id="MF_01085"/>
    </source>
</evidence>
<evidence type="ECO:0000256" key="2">
    <source>
        <dbReference type="SAM" id="MobiDB-lite"/>
    </source>
</evidence>